<name>PDXS_FUSNN</name>
<proteinExistence type="inferred from homology"/>
<comment type="function">
    <text evidence="1">Catalyzes the formation of pyridoxal 5'-phosphate from ribose 5-phosphate (RBP), glyceraldehyde 3-phosphate (G3P) and ammonia. The ammonia is provided by the PdxT subunit. Can also use ribulose 5-phosphate and dihydroxyacetone phosphate as substrates, resulting from enzyme-catalyzed isomerization of RBP and G3P, respectively.</text>
</comment>
<comment type="catalytic activity">
    <reaction evidence="1">
        <text>aldehydo-D-ribose 5-phosphate + D-glyceraldehyde 3-phosphate + L-glutamine = pyridoxal 5'-phosphate + L-glutamate + phosphate + 3 H2O + H(+)</text>
        <dbReference type="Rhea" id="RHEA:31507"/>
        <dbReference type="ChEBI" id="CHEBI:15377"/>
        <dbReference type="ChEBI" id="CHEBI:15378"/>
        <dbReference type="ChEBI" id="CHEBI:29985"/>
        <dbReference type="ChEBI" id="CHEBI:43474"/>
        <dbReference type="ChEBI" id="CHEBI:58273"/>
        <dbReference type="ChEBI" id="CHEBI:58359"/>
        <dbReference type="ChEBI" id="CHEBI:59776"/>
        <dbReference type="ChEBI" id="CHEBI:597326"/>
        <dbReference type="EC" id="4.3.3.6"/>
    </reaction>
</comment>
<comment type="pathway">
    <text evidence="1">Cofactor biosynthesis; pyridoxal 5'-phosphate biosynthesis.</text>
</comment>
<comment type="subunit">
    <text evidence="1">In the presence of PdxT, forms a dodecamer of heterodimers.</text>
</comment>
<comment type="similarity">
    <text evidence="1">Belongs to the PdxS/SNZ family.</text>
</comment>
<dbReference type="EC" id="4.3.3.6" evidence="1"/>
<dbReference type="EMBL" id="AE009951">
    <property type="protein sequence ID" value="AAL95656.1"/>
    <property type="molecule type" value="Genomic_DNA"/>
</dbReference>
<dbReference type="RefSeq" id="NP_604357.1">
    <property type="nucleotide sequence ID" value="NC_003454.1"/>
</dbReference>
<dbReference type="RefSeq" id="WP_005902306.1">
    <property type="nucleotide sequence ID" value="NZ_OZ209243.1"/>
</dbReference>
<dbReference type="SMR" id="Q8RDP7"/>
<dbReference type="FunCoup" id="Q8RDP7">
    <property type="interactions" value="176"/>
</dbReference>
<dbReference type="STRING" id="190304.FN1463"/>
<dbReference type="PaxDb" id="190304-FN1463"/>
<dbReference type="EnsemblBacteria" id="AAL95656">
    <property type="protein sequence ID" value="AAL95656"/>
    <property type="gene ID" value="FN1463"/>
</dbReference>
<dbReference type="GeneID" id="79784425"/>
<dbReference type="KEGG" id="fnu:FN1463"/>
<dbReference type="PATRIC" id="fig|190304.8.peg.2023"/>
<dbReference type="eggNOG" id="COG0214">
    <property type="taxonomic scope" value="Bacteria"/>
</dbReference>
<dbReference type="HOGENOM" id="CLU_055352_1_0_0"/>
<dbReference type="InParanoid" id="Q8RDP7"/>
<dbReference type="BioCyc" id="FNUC190304:G1FZS-2031-MONOMER"/>
<dbReference type="UniPathway" id="UPA00245"/>
<dbReference type="Proteomes" id="UP000002521">
    <property type="component" value="Chromosome"/>
</dbReference>
<dbReference type="GO" id="GO:0016843">
    <property type="term" value="F:amine-lyase activity"/>
    <property type="evidence" value="ECO:0000318"/>
    <property type="project" value="GO_Central"/>
</dbReference>
<dbReference type="GO" id="GO:0036381">
    <property type="term" value="F:pyridoxal 5'-phosphate synthase (glutamine hydrolysing) activity"/>
    <property type="evidence" value="ECO:0007669"/>
    <property type="project" value="UniProtKB-UniRule"/>
</dbReference>
<dbReference type="GO" id="GO:0006520">
    <property type="term" value="P:amino acid metabolic process"/>
    <property type="evidence" value="ECO:0000318"/>
    <property type="project" value="GO_Central"/>
</dbReference>
<dbReference type="GO" id="GO:0042823">
    <property type="term" value="P:pyridoxal phosphate biosynthetic process"/>
    <property type="evidence" value="ECO:0000318"/>
    <property type="project" value="GO_Central"/>
</dbReference>
<dbReference type="GO" id="GO:0008615">
    <property type="term" value="P:pyridoxine biosynthetic process"/>
    <property type="evidence" value="ECO:0000318"/>
    <property type="project" value="GO_Central"/>
</dbReference>
<dbReference type="CDD" id="cd04727">
    <property type="entry name" value="pdxS"/>
    <property type="match status" value="1"/>
</dbReference>
<dbReference type="FunFam" id="3.20.20.70:FF:000001">
    <property type="entry name" value="Pyridoxine biosynthesis protein PDX1"/>
    <property type="match status" value="1"/>
</dbReference>
<dbReference type="Gene3D" id="3.20.20.70">
    <property type="entry name" value="Aldolase class I"/>
    <property type="match status" value="1"/>
</dbReference>
<dbReference type="HAMAP" id="MF_01824">
    <property type="entry name" value="PdxS"/>
    <property type="match status" value="1"/>
</dbReference>
<dbReference type="InterPro" id="IPR013785">
    <property type="entry name" value="Aldolase_TIM"/>
</dbReference>
<dbReference type="InterPro" id="IPR001852">
    <property type="entry name" value="PdxS/SNZ"/>
</dbReference>
<dbReference type="InterPro" id="IPR033755">
    <property type="entry name" value="PdxS/SNZ_N"/>
</dbReference>
<dbReference type="InterPro" id="IPR011060">
    <property type="entry name" value="RibuloseP-bd_barrel"/>
</dbReference>
<dbReference type="NCBIfam" id="NF003215">
    <property type="entry name" value="PRK04180.1"/>
    <property type="match status" value="1"/>
</dbReference>
<dbReference type="NCBIfam" id="TIGR00343">
    <property type="entry name" value="pyridoxal 5'-phosphate synthase lyase subunit PdxS"/>
    <property type="match status" value="1"/>
</dbReference>
<dbReference type="PANTHER" id="PTHR31829">
    <property type="entry name" value="PYRIDOXAL 5'-PHOSPHATE SYNTHASE SUBUNIT SNZ1-RELATED"/>
    <property type="match status" value="1"/>
</dbReference>
<dbReference type="PANTHER" id="PTHR31829:SF0">
    <property type="entry name" value="PYRIDOXAL 5'-PHOSPHATE SYNTHASE SUBUNIT SNZ1-RELATED"/>
    <property type="match status" value="1"/>
</dbReference>
<dbReference type="Pfam" id="PF01680">
    <property type="entry name" value="SOR_SNZ"/>
    <property type="match status" value="1"/>
</dbReference>
<dbReference type="PIRSF" id="PIRSF029271">
    <property type="entry name" value="Pdx1"/>
    <property type="match status" value="1"/>
</dbReference>
<dbReference type="SUPFAM" id="SSF51366">
    <property type="entry name" value="Ribulose-phoshate binding barrel"/>
    <property type="match status" value="1"/>
</dbReference>
<dbReference type="PROSITE" id="PS01235">
    <property type="entry name" value="PDXS_SNZ_1"/>
    <property type="match status" value="1"/>
</dbReference>
<dbReference type="PROSITE" id="PS51129">
    <property type="entry name" value="PDXS_SNZ_2"/>
    <property type="match status" value="1"/>
</dbReference>
<keyword id="KW-0456">Lyase</keyword>
<keyword id="KW-0663">Pyridoxal phosphate</keyword>
<keyword id="KW-1185">Reference proteome</keyword>
<keyword id="KW-0704">Schiff base</keyword>
<feature type="chain" id="PRO_0000109394" description="Pyridoxal 5'-phosphate synthase subunit PdxS">
    <location>
        <begin position="1"/>
        <end position="280"/>
    </location>
</feature>
<feature type="active site" description="Schiff-base intermediate with D-ribose 5-phosphate" evidence="1">
    <location>
        <position position="69"/>
    </location>
</feature>
<feature type="binding site" evidence="1">
    <location>
        <position position="12"/>
    </location>
    <ligand>
        <name>D-ribose 5-phosphate</name>
        <dbReference type="ChEBI" id="CHEBI:78346"/>
    </ligand>
</feature>
<feature type="binding site" evidence="1">
    <location>
        <position position="141"/>
    </location>
    <ligand>
        <name>D-ribose 5-phosphate</name>
        <dbReference type="ChEBI" id="CHEBI:78346"/>
    </ligand>
</feature>
<feature type="binding site" evidence="1">
    <location>
        <position position="153"/>
    </location>
    <ligand>
        <name>D-glyceraldehyde 3-phosphate</name>
        <dbReference type="ChEBI" id="CHEBI:59776"/>
    </ligand>
</feature>
<feature type="binding site" evidence="1">
    <location>
        <position position="202"/>
    </location>
    <ligand>
        <name>D-ribose 5-phosphate</name>
        <dbReference type="ChEBI" id="CHEBI:78346"/>
    </ligand>
</feature>
<feature type="binding site" evidence="1">
    <location>
        <begin position="223"/>
        <end position="224"/>
    </location>
    <ligand>
        <name>D-ribose 5-phosphate</name>
        <dbReference type="ChEBI" id="CHEBI:78346"/>
    </ligand>
</feature>
<accession>Q8RDP7</accession>
<evidence type="ECO:0000255" key="1">
    <source>
        <dbReference type="HAMAP-Rule" id="MF_01824"/>
    </source>
</evidence>
<organism>
    <name type="scientific">Fusobacterium nucleatum subsp. nucleatum (strain ATCC 25586 / DSM 15643 / BCRC 10681 / CIP 101130 / JCM 8532 / KCTC 2640 / LMG 13131 / VPI 4355)</name>
    <dbReference type="NCBI Taxonomy" id="190304"/>
    <lineage>
        <taxon>Bacteria</taxon>
        <taxon>Fusobacteriati</taxon>
        <taxon>Fusobacteriota</taxon>
        <taxon>Fusobacteriia</taxon>
        <taxon>Fusobacteriales</taxon>
        <taxon>Fusobacteriaceae</taxon>
        <taxon>Fusobacterium</taxon>
    </lineage>
</organism>
<gene>
    <name evidence="1" type="primary">pdxS</name>
    <name type="ordered locus">FN1463</name>
</gene>
<reference key="1">
    <citation type="journal article" date="2002" name="J. Bacteriol.">
        <title>Genome sequence and analysis of the oral bacterium Fusobacterium nucleatum strain ATCC 25586.</title>
        <authorList>
            <person name="Kapatral V."/>
            <person name="Anderson I."/>
            <person name="Ivanova N."/>
            <person name="Reznik G."/>
            <person name="Los T."/>
            <person name="Lykidis A."/>
            <person name="Bhattacharyya A."/>
            <person name="Bartman A."/>
            <person name="Gardner W."/>
            <person name="Grechkin G."/>
            <person name="Zhu L."/>
            <person name="Vasieva O."/>
            <person name="Chu L."/>
            <person name="Kogan Y."/>
            <person name="Chaga O."/>
            <person name="Goltsman E."/>
            <person name="Bernal A."/>
            <person name="Larsen N."/>
            <person name="D'Souza M."/>
            <person name="Walunas T."/>
            <person name="Pusch G."/>
            <person name="Haselkorn R."/>
            <person name="Fonstein M."/>
            <person name="Kyrpides N.C."/>
            <person name="Overbeek R."/>
        </authorList>
    </citation>
    <scope>NUCLEOTIDE SEQUENCE [LARGE SCALE GENOMIC DNA]</scope>
    <source>
        <strain>ATCC 25586 / DSM 15643 / BCRC 10681 / CIP 101130 / JCM 8532 / KCTC 2640 / LMG 13131 / VPI 4355</strain>
    </source>
</reference>
<sequence length="280" mass="30231">MDTRFNGGVIMDVTTKEQAIIAEEAGAVAVMALERIPADIRAAGGVSRMSDPKLIKEIMSAVKIPVMAKVRIGHFVEAEILQAIGIDFIDESEVLSPADSVHHVNKRDFSTPFVCGARNLGEALRRISEGAKMIRTKGEAGTGDVVQAVSHMRQIIKEINLVKALREDELYVMAKDLQVPYDLVKYVHDNGRLPVPNFSAGGVATPADAALMRRLGADGVFVGSGIFKSGDPKKRAKAIVEAVKNYNNPEIIAKVSEDLGEAMVGINENEIKIIMAERGV</sequence>
<protein>
    <recommendedName>
        <fullName evidence="1">Pyridoxal 5'-phosphate synthase subunit PdxS</fullName>
        <shortName evidence="1">PLP synthase subunit PdxS</shortName>
        <ecNumber evidence="1">4.3.3.6</ecNumber>
    </recommendedName>
    <alternativeName>
        <fullName evidence="1">Pdx1</fullName>
    </alternativeName>
</protein>